<reference key="1">
    <citation type="journal article" date="2008" name="BMC Genomics">
        <title>The genome of Aeromonas salmonicida subsp. salmonicida A449: insights into the evolution of a fish pathogen.</title>
        <authorList>
            <person name="Reith M.E."/>
            <person name="Singh R.K."/>
            <person name="Curtis B."/>
            <person name="Boyd J.M."/>
            <person name="Bouevitch A."/>
            <person name="Kimball J."/>
            <person name="Munholland J."/>
            <person name="Murphy C."/>
            <person name="Sarty D."/>
            <person name="Williams J."/>
            <person name="Nash J.H."/>
            <person name="Johnson S.C."/>
            <person name="Brown L.L."/>
        </authorList>
    </citation>
    <scope>NUCLEOTIDE SEQUENCE [LARGE SCALE GENOMIC DNA]</scope>
    <source>
        <strain>A449</strain>
    </source>
</reference>
<gene>
    <name evidence="1" type="primary">aspS</name>
    <name type="ordered locus">ASA_2844</name>
</gene>
<evidence type="ECO:0000255" key="1">
    <source>
        <dbReference type="HAMAP-Rule" id="MF_00044"/>
    </source>
</evidence>
<keyword id="KW-0030">Aminoacyl-tRNA synthetase</keyword>
<keyword id="KW-0067">ATP-binding</keyword>
<keyword id="KW-0963">Cytoplasm</keyword>
<keyword id="KW-0436">Ligase</keyword>
<keyword id="KW-0547">Nucleotide-binding</keyword>
<keyword id="KW-0648">Protein biosynthesis</keyword>
<sequence length="588" mass="65386">MRSIYCGQVNEAHAGQTITLCGWVHRRRDLGGLIFIDMRDREGIVQVFFDPDKPDAFALASELRGEFCIQVSGVVRTRPDSQRNSDMATGAIEVFAHELTIINRAEPLPLDFNQVNSEEQRLKFRYLDLRRPEMAKYLKTRAKASAFVRRFMDEHGFLDIETPMLTKATPEGARDYLVPSRVHKGKFYALPQSPQLFKQLLMMSGFDRYYQIVKCFRDEDLRADRQPEFTQIDVETSFMTAPQVRELMEEMIRNLWQHVLAVDLGDFPVMTFDEAMRRFGSDKPDLRLPMELVDVADLLTAVEFAVFAGPANDPKGRVAALKVPGGAELSRKQIDEYTKFVGIYGAKGLAWMKVNEAANGIEGVQSPVAKFLSDEIVREILARTGAADGDIIFFGADSKKVVADAIGALRLKVGRDLGLMENSWKPLWVIDFPMFEEDSEGGLAAMHHPFTAPSNLGPSELKANPLSAYANAYDMVINGYEVGGGSVRIHNSEMQATVFDILGITPAEQRLKFGFLLDALKYGTPPHAGLAFGLDRLSMLLTGTDNIRDVIAFPKTTAAACLMTDAPSFANQAQMSELAIATTVKGDE</sequence>
<proteinExistence type="inferred from homology"/>
<name>SYD_AERS4</name>
<accession>A4SPN5</accession>
<protein>
    <recommendedName>
        <fullName evidence="1">Aspartate--tRNA ligase</fullName>
        <ecNumber evidence="1">6.1.1.12</ecNumber>
    </recommendedName>
    <alternativeName>
        <fullName evidence="1">Aspartyl-tRNA synthetase</fullName>
        <shortName evidence="1">AspRS</shortName>
    </alternativeName>
</protein>
<organism>
    <name type="scientific">Aeromonas salmonicida (strain A449)</name>
    <dbReference type="NCBI Taxonomy" id="382245"/>
    <lineage>
        <taxon>Bacteria</taxon>
        <taxon>Pseudomonadati</taxon>
        <taxon>Pseudomonadota</taxon>
        <taxon>Gammaproteobacteria</taxon>
        <taxon>Aeromonadales</taxon>
        <taxon>Aeromonadaceae</taxon>
        <taxon>Aeromonas</taxon>
    </lineage>
</organism>
<feature type="chain" id="PRO_1000006629" description="Aspartate--tRNA ligase">
    <location>
        <begin position="1"/>
        <end position="588"/>
    </location>
</feature>
<feature type="region of interest" description="Aspartate" evidence="1">
    <location>
        <begin position="195"/>
        <end position="198"/>
    </location>
</feature>
<feature type="binding site" evidence="1">
    <location>
        <position position="171"/>
    </location>
    <ligand>
        <name>L-aspartate</name>
        <dbReference type="ChEBI" id="CHEBI:29991"/>
    </ligand>
</feature>
<feature type="binding site" evidence="1">
    <location>
        <begin position="217"/>
        <end position="219"/>
    </location>
    <ligand>
        <name>ATP</name>
        <dbReference type="ChEBI" id="CHEBI:30616"/>
    </ligand>
</feature>
<feature type="binding site" evidence="1">
    <location>
        <position position="217"/>
    </location>
    <ligand>
        <name>L-aspartate</name>
        <dbReference type="ChEBI" id="CHEBI:29991"/>
    </ligand>
</feature>
<feature type="binding site" evidence="1">
    <location>
        <position position="226"/>
    </location>
    <ligand>
        <name>ATP</name>
        <dbReference type="ChEBI" id="CHEBI:30616"/>
    </ligand>
</feature>
<feature type="binding site" evidence="1">
    <location>
        <position position="447"/>
    </location>
    <ligand>
        <name>L-aspartate</name>
        <dbReference type="ChEBI" id="CHEBI:29991"/>
    </ligand>
</feature>
<feature type="binding site" evidence="1">
    <location>
        <position position="481"/>
    </location>
    <ligand>
        <name>ATP</name>
        <dbReference type="ChEBI" id="CHEBI:30616"/>
    </ligand>
</feature>
<feature type="binding site" evidence="1">
    <location>
        <position position="488"/>
    </location>
    <ligand>
        <name>L-aspartate</name>
        <dbReference type="ChEBI" id="CHEBI:29991"/>
    </ligand>
</feature>
<feature type="binding site" evidence="1">
    <location>
        <begin position="533"/>
        <end position="536"/>
    </location>
    <ligand>
        <name>ATP</name>
        <dbReference type="ChEBI" id="CHEBI:30616"/>
    </ligand>
</feature>
<dbReference type="EC" id="6.1.1.12" evidence="1"/>
<dbReference type="EMBL" id="CP000644">
    <property type="protein sequence ID" value="ABO90857.1"/>
    <property type="molecule type" value="Genomic_DNA"/>
</dbReference>
<dbReference type="RefSeq" id="WP_005313102.1">
    <property type="nucleotide sequence ID" value="NC_009348.1"/>
</dbReference>
<dbReference type="SMR" id="A4SPN5"/>
<dbReference type="STRING" id="29491.GCA_000820065_02216"/>
<dbReference type="KEGG" id="asa:ASA_2844"/>
<dbReference type="PATRIC" id="fig|382245.13.peg.2822"/>
<dbReference type="eggNOG" id="COG0173">
    <property type="taxonomic scope" value="Bacteria"/>
</dbReference>
<dbReference type="HOGENOM" id="CLU_014330_3_2_6"/>
<dbReference type="Proteomes" id="UP000000225">
    <property type="component" value="Chromosome"/>
</dbReference>
<dbReference type="GO" id="GO:0005737">
    <property type="term" value="C:cytoplasm"/>
    <property type="evidence" value="ECO:0007669"/>
    <property type="project" value="UniProtKB-SubCell"/>
</dbReference>
<dbReference type="GO" id="GO:0004815">
    <property type="term" value="F:aspartate-tRNA ligase activity"/>
    <property type="evidence" value="ECO:0007669"/>
    <property type="project" value="UniProtKB-UniRule"/>
</dbReference>
<dbReference type="GO" id="GO:0005524">
    <property type="term" value="F:ATP binding"/>
    <property type="evidence" value="ECO:0007669"/>
    <property type="project" value="UniProtKB-UniRule"/>
</dbReference>
<dbReference type="GO" id="GO:0003676">
    <property type="term" value="F:nucleic acid binding"/>
    <property type="evidence" value="ECO:0007669"/>
    <property type="project" value="InterPro"/>
</dbReference>
<dbReference type="GO" id="GO:0006422">
    <property type="term" value="P:aspartyl-tRNA aminoacylation"/>
    <property type="evidence" value="ECO:0007669"/>
    <property type="project" value="UniProtKB-UniRule"/>
</dbReference>
<dbReference type="CDD" id="cd00777">
    <property type="entry name" value="AspRS_core"/>
    <property type="match status" value="1"/>
</dbReference>
<dbReference type="CDD" id="cd04317">
    <property type="entry name" value="EcAspRS_like_N"/>
    <property type="match status" value="1"/>
</dbReference>
<dbReference type="FunFam" id="2.40.50.140:FF:000080">
    <property type="entry name" value="Aspartate--tRNA ligase"/>
    <property type="match status" value="1"/>
</dbReference>
<dbReference type="Gene3D" id="3.30.930.10">
    <property type="entry name" value="Bira Bifunctional Protein, Domain 2"/>
    <property type="match status" value="1"/>
</dbReference>
<dbReference type="Gene3D" id="3.30.1360.30">
    <property type="entry name" value="GAD-like domain"/>
    <property type="match status" value="1"/>
</dbReference>
<dbReference type="Gene3D" id="2.40.50.140">
    <property type="entry name" value="Nucleic acid-binding proteins"/>
    <property type="match status" value="1"/>
</dbReference>
<dbReference type="HAMAP" id="MF_00044">
    <property type="entry name" value="Asp_tRNA_synth_type1"/>
    <property type="match status" value="1"/>
</dbReference>
<dbReference type="InterPro" id="IPR004364">
    <property type="entry name" value="Aa-tRNA-synt_II"/>
</dbReference>
<dbReference type="InterPro" id="IPR006195">
    <property type="entry name" value="aa-tRNA-synth_II"/>
</dbReference>
<dbReference type="InterPro" id="IPR045864">
    <property type="entry name" value="aa-tRNA-synth_II/BPL/LPL"/>
</dbReference>
<dbReference type="InterPro" id="IPR004524">
    <property type="entry name" value="Asp-tRNA-ligase_1"/>
</dbReference>
<dbReference type="InterPro" id="IPR047089">
    <property type="entry name" value="Asp-tRNA-ligase_1_N"/>
</dbReference>
<dbReference type="InterPro" id="IPR002312">
    <property type="entry name" value="Asp/Asn-tRNA-synth_IIb"/>
</dbReference>
<dbReference type="InterPro" id="IPR047090">
    <property type="entry name" value="AspRS_core"/>
</dbReference>
<dbReference type="InterPro" id="IPR004115">
    <property type="entry name" value="GAD-like_sf"/>
</dbReference>
<dbReference type="InterPro" id="IPR029351">
    <property type="entry name" value="GAD_dom"/>
</dbReference>
<dbReference type="InterPro" id="IPR012340">
    <property type="entry name" value="NA-bd_OB-fold"/>
</dbReference>
<dbReference type="InterPro" id="IPR004365">
    <property type="entry name" value="NA-bd_OB_tRNA"/>
</dbReference>
<dbReference type="NCBIfam" id="TIGR00459">
    <property type="entry name" value="aspS_bact"/>
    <property type="match status" value="1"/>
</dbReference>
<dbReference type="NCBIfam" id="NF001750">
    <property type="entry name" value="PRK00476.1"/>
    <property type="match status" value="1"/>
</dbReference>
<dbReference type="PANTHER" id="PTHR22594:SF5">
    <property type="entry name" value="ASPARTATE--TRNA LIGASE, MITOCHONDRIAL"/>
    <property type="match status" value="1"/>
</dbReference>
<dbReference type="PANTHER" id="PTHR22594">
    <property type="entry name" value="ASPARTYL/LYSYL-TRNA SYNTHETASE"/>
    <property type="match status" value="1"/>
</dbReference>
<dbReference type="Pfam" id="PF02938">
    <property type="entry name" value="GAD"/>
    <property type="match status" value="1"/>
</dbReference>
<dbReference type="Pfam" id="PF00152">
    <property type="entry name" value="tRNA-synt_2"/>
    <property type="match status" value="1"/>
</dbReference>
<dbReference type="Pfam" id="PF01336">
    <property type="entry name" value="tRNA_anti-codon"/>
    <property type="match status" value="1"/>
</dbReference>
<dbReference type="PRINTS" id="PR01042">
    <property type="entry name" value="TRNASYNTHASP"/>
</dbReference>
<dbReference type="SUPFAM" id="SSF55681">
    <property type="entry name" value="Class II aaRS and biotin synthetases"/>
    <property type="match status" value="1"/>
</dbReference>
<dbReference type="SUPFAM" id="SSF55261">
    <property type="entry name" value="GAD domain-like"/>
    <property type="match status" value="1"/>
</dbReference>
<dbReference type="SUPFAM" id="SSF50249">
    <property type="entry name" value="Nucleic acid-binding proteins"/>
    <property type="match status" value="1"/>
</dbReference>
<dbReference type="PROSITE" id="PS50862">
    <property type="entry name" value="AA_TRNA_LIGASE_II"/>
    <property type="match status" value="1"/>
</dbReference>
<comment type="function">
    <text evidence="1">Catalyzes the attachment of L-aspartate to tRNA(Asp) in a two-step reaction: L-aspartate is first activated by ATP to form Asp-AMP and then transferred to the acceptor end of tRNA(Asp).</text>
</comment>
<comment type="catalytic activity">
    <reaction evidence="1">
        <text>tRNA(Asp) + L-aspartate + ATP = L-aspartyl-tRNA(Asp) + AMP + diphosphate</text>
        <dbReference type="Rhea" id="RHEA:19649"/>
        <dbReference type="Rhea" id="RHEA-COMP:9660"/>
        <dbReference type="Rhea" id="RHEA-COMP:9678"/>
        <dbReference type="ChEBI" id="CHEBI:29991"/>
        <dbReference type="ChEBI" id="CHEBI:30616"/>
        <dbReference type="ChEBI" id="CHEBI:33019"/>
        <dbReference type="ChEBI" id="CHEBI:78442"/>
        <dbReference type="ChEBI" id="CHEBI:78516"/>
        <dbReference type="ChEBI" id="CHEBI:456215"/>
        <dbReference type="EC" id="6.1.1.12"/>
    </reaction>
</comment>
<comment type="subunit">
    <text evidence="1">Homodimer.</text>
</comment>
<comment type="subcellular location">
    <subcellularLocation>
        <location evidence="1">Cytoplasm</location>
    </subcellularLocation>
</comment>
<comment type="similarity">
    <text evidence="1">Belongs to the class-II aminoacyl-tRNA synthetase family. Type 1 subfamily.</text>
</comment>